<comment type="function">
    <text evidence="3">Adenylate-forming reductase, a natural product biosynthesis enzyme that resembles non-ribosomal peptide synthetases, yet serves to modify one substrate, rather than to condense two or more building blocks. The A-domain preferentially accepts L-serine, L-alanine and L-valine as substrates. The natural product of the enzyme is not yet known.</text>
</comment>
<comment type="domain">
    <text evidence="6">Contains three distinct domains: an adenylation (A) domain that activates the substrate amino acid which is subsequently covalently linked as a thioester (aminoacyl-S-PCP) to the 4'-phosphopantetheine prosthetic group of the second domain, the peptidyl carrier protein (PCP) domain, as well as a reductase (R) domain of the ferredoxin-NADP reductase (FNR) type.</text>
</comment>
<comment type="similarity">
    <text evidence="5">Belongs to the adenylate-forming reductase family.</text>
</comment>
<comment type="sequence caution" evidence="5">
    <conflict type="erroneous gene model prediction">
        <sequence resource="EMBL-CDS" id="EAU85219"/>
    </conflict>
</comment>
<evidence type="ECO:0000250" key="1">
    <source>
        <dbReference type="UniProtKB" id="Q6RKB1"/>
    </source>
</evidence>
<evidence type="ECO:0000255" key="2"/>
<evidence type="ECO:0000269" key="3">
    <source>
    </source>
</evidence>
<evidence type="ECO:0000303" key="4">
    <source>
    </source>
</evidence>
<evidence type="ECO:0000305" key="5"/>
<evidence type="ECO:0000305" key="6">
    <source>
    </source>
</evidence>
<sequence>MGSDLLSHLSANDRALFWEYGQGAKAFVPFQCAHHAFEFHAKANPDLTAVEEFETKITYKELDRQANCLATRLRGSGVNVGSRVCLLVERSPWLVIGVLGVLKAGAAYIPFDGNVVSDSTLKHAIQDSAPTVILTLRKFQHRVADAASTEIVYLDETLCTSYNPNHCTKPRDFTSSTNSVYIIYTSGTTGTPKGVNVTHGNVTNLLCIAPGNLGMKPGIKVSQMLNISFDFAAWEILGSMVNGATLCLRGKTSKEWKAVMRNVDILFSTPSMLAPHNPADYPNLSTVVVAGEACPKATADLWGARVKFYNACGPTEVTIANTMQLHTPGDIVTIGGPTPNNSVYVLDENMRPVPIGEPGVMWGGGAGITKGYLNLPDKTAERYVPDPFADDGSMMFNTGDLGRWHSNGTLVHLGRIDNQVKIKGFRVELDGVATAMETCPGVQAATALLIDGELWGFATPASLKPEDIKEAALKVQPYYAVPTRYLTLDEFPETANGKTDKRILRQMALDAKNQEEKPANKAPAQNAAWVNLPTTVIAQAAGAQPPTIPHRSSERSLVSTVGSTVVGSQVKQVDSSASSALEKEEYIWSGYLEDEVPEKTQGRIVRNLRHQIFNLYRRLFSVVFIINMALFIWILVTKDYDAHRLGGIVVANVFIGVLMRQEMVINTLFIIFTAVPPSWPLCIRRVCARIYTIGGIHSGAGVSAFVWLVAFTAQATKEMINKGKTSVRTVAITYVILAELLGILIFAYPALRKKMHDTFENTHRYLGWTALALVWIQFMFLTIDYLPEGQTLGQTLVKSPHFWLVIIFTISIIWPWFRLRKVDCRPEVLSNHAVRLWFDYGVTPDAGTFVRLSDAPLKEWHGFASISIPGRTGYSVVVSRAGDWTSKHINDPPTKMWVKGVPTYGVLKLVPMFRRMVLVATGSGIGPCAPAILRRQIPMRVLWTAPNVRETFGDNLCNSILEACPDAVIYDTRKHGKPDMVKLVLRLVKEFDAEAVAIISNQPLTEKVVYGCMSRGIPAFGAIWDS</sequence>
<name>N6235_COPC7</name>
<feature type="chain" id="PRO_0000442641" description="Adenylate-forming reductase 06235">
    <location>
        <begin position="1"/>
        <end position="1026"/>
    </location>
</feature>
<feature type="region of interest" description="Adenylation (A) domain" evidence="2 6">
    <location>
        <begin position="37"/>
        <end position="422"/>
    </location>
</feature>
<feature type="region of interest" description="Thiolation and peptide carrier (T) domain" evidence="6">
    <location>
        <begin position="556"/>
        <end position="638"/>
    </location>
</feature>
<feature type="region of interest" description="Reductase (R) domain" evidence="6">
    <location>
        <begin position="682"/>
        <end position="901"/>
    </location>
</feature>
<feature type="binding site" evidence="1">
    <location>
        <begin position="332"/>
        <end position="333"/>
    </location>
    <ligand>
        <name>AMP</name>
        <dbReference type="ChEBI" id="CHEBI:456215"/>
    </ligand>
</feature>
<feature type="binding site" evidence="1">
    <location>
        <begin position="412"/>
        <end position="415"/>
    </location>
    <ligand>
        <name>AMP</name>
        <dbReference type="ChEBI" id="CHEBI:456215"/>
    </ligand>
</feature>
<feature type="binding site" evidence="1">
    <location>
        <begin position="685"/>
        <end position="688"/>
    </location>
    <ligand>
        <name>NADP(+)</name>
        <dbReference type="ChEBI" id="CHEBI:58349"/>
    </ligand>
</feature>
<feature type="binding site" evidence="1">
    <location>
        <begin position="769"/>
        <end position="771"/>
    </location>
    <ligand>
        <name>NADP(+)</name>
        <dbReference type="ChEBI" id="CHEBI:58349"/>
    </ligand>
</feature>
<feature type="binding site" evidence="1">
    <location>
        <position position="840"/>
    </location>
    <ligand>
        <name>NADP(+)</name>
        <dbReference type="ChEBI" id="CHEBI:58349"/>
    </ligand>
</feature>
<organism>
    <name type="scientific">Coprinopsis cinerea (strain Okayama-7 / 130 / ATCC MYA-4618 / FGSC 9003)</name>
    <name type="common">Inky cap fungus</name>
    <name type="synonym">Hormographiella aspergillata</name>
    <dbReference type="NCBI Taxonomy" id="240176"/>
    <lineage>
        <taxon>Eukaryota</taxon>
        <taxon>Fungi</taxon>
        <taxon>Dikarya</taxon>
        <taxon>Basidiomycota</taxon>
        <taxon>Agaricomycotina</taxon>
        <taxon>Agaricomycetes</taxon>
        <taxon>Agaricomycetidae</taxon>
        <taxon>Agaricales</taxon>
        <taxon>Agaricineae</taxon>
        <taxon>Psathyrellaceae</taxon>
        <taxon>Coprinopsis</taxon>
    </lineage>
</organism>
<dbReference type="EC" id="1.2.1.-" evidence="3"/>
<dbReference type="EMBL" id="KX118592">
    <property type="protein sequence ID" value="ANX99776.1"/>
    <property type="molecule type" value="mRNA"/>
</dbReference>
<dbReference type="EMBL" id="AACS02000004">
    <property type="protein sequence ID" value="EAU85219.2"/>
    <property type="status" value="ALT_SEQ"/>
    <property type="molecule type" value="Genomic_DNA"/>
</dbReference>
<dbReference type="RefSeq" id="XP_001836648.2">
    <property type="nucleotide sequence ID" value="XM_001836596.2"/>
</dbReference>
<dbReference type="SMR" id="A8NVB7"/>
<dbReference type="STRING" id="240176.A8NVB7"/>
<dbReference type="GeneID" id="6013195"/>
<dbReference type="KEGG" id="cci:CC1G_06235"/>
<dbReference type="eggNOG" id="KOG1178">
    <property type="taxonomic scope" value="Eukaryota"/>
</dbReference>
<dbReference type="HOGENOM" id="CLU_005562_2_0_1"/>
<dbReference type="InParanoid" id="A8NVB7"/>
<dbReference type="OrthoDB" id="408177at2759"/>
<dbReference type="Proteomes" id="UP000001861">
    <property type="component" value="Unassembled WGS sequence"/>
</dbReference>
<dbReference type="GO" id="GO:0005524">
    <property type="term" value="F:ATP binding"/>
    <property type="evidence" value="ECO:0007669"/>
    <property type="project" value="UniProtKB-KW"/>
</dbReference>
<dbReference type="GO" id="GO:0016491">
    <property type="term" value="F:oxidoreductase activity"/>
    <property type="evidence" value="ECO:0007669"/>
    <property type="project" value="UniProtKB-KW"/>
</dbReference>
<dbReference type="Gene3D" id="3.30.300.30">
    <property type="match status" value="1"/>
</dbReference>
<dbReference type="Gene3D" id="3.40.50.12780">
    <property type="entry name" value="N-terminal domain of ligase-like"/>
    <property type="match status" value="1"/>
</dbReference>
<dbReference type="InterPro" id="IPR010071">
    <property type="entry name" value="AA_adenyl_dom"/>
</dbReference>
<dbReference type="InterPro" id="IPR052979">
    <property type="entry name" value="Adenylate-forming_domain"/>
</dbReference>
<dbReference type="InterPro" id="IPR045851">
    <property type="entry name" value="AMP-bd_C_sf"/>
</dbReference>
<dbReference type="InterPro" id="IPR020845">
    <property type="entry name" value="AMP-binding_CS"/>
</dbReference>
<dbReference type="InterPro" id="IPR000873">
    <property type="entry name" value="AMP-dep_synth/lig_dom"/>
</dbReference>
<dbReference type="InterPro" id="IPR042099">
    <property type="entry name" value="ANL_N_sf"/>
</dbReference>
<dbReference type="NCBIfam" id="TIGR01733">
    <property type="entry name" value="AA-adenyl-dom"/>
    <property type="match status" value="1"/>
</dbReference>
<dbReference type="PANTHER" id="PTHR33927:SF5">
    <property type="entry name" value="ENZYME, PUTATIVE (AFU_ORTHOLOGUE AFUA_8G01222)-RELATED"/>
    <property type="match status" value="1"/>
</dbReference>
<dbReference type="PANTHER" id="PTHR33927">
    <property type="entry name" value="TRANSMEMBRANE PROTEIN"/>
    <property type="match status" value="1"/>
</dbReference>
<dbReference type="Pfam" id="PF00501">
    <property type="entry name" value="AMP-binding"/>
    <property type="match status" value="1"/>
</dbReference>
<dbReference type="SUPFAM" id="SSF56801">
    <property type="entry name" value="Acetyl-CoA synthetase-like"/>
    <property type="match status" value="1"/>
</dbReference>
<dbReference type="PROSITE" id="PS00455">
    <property type="entry name" value="AMP_BINDING"/>
    <property type="match status" value="1"/>
</dbReference>
<reference key="1">
    <citation type="journal article" date="2018" name="Fungal Genet. Biol.">
        <title>Multi-genome analysis identifies functional and phylogenetic diversity of basidiomycete adenylate-forming reductases.</title>
        <authorList>
            <person name="Brandenburger E."/>
            <person name="Braga D."/>
            <person name="Kombrink A."/>
            <person name="Lackner G."/>
            <person name="Gressler J."/>
            <person name="Kuenzler M."/>
            <person name="Hoffmeister D."/>
        </authorList>
    </citation>
    <scope>NUCLEOTIDE SEQUENCE [MRNA]</scope>
    <scope>FUNCTION</scope>
    <scope>CATALYTIC ACTIVITY</scope>
    <source>
        <strain>AmutBmut</strain>
    </source>
</reference>
<reference key="2">
    <citation type="journal article" date="2010" name="Proc. Natl. Acad. Sci. U.S.A.">
        <title>Insights into evolution of multicellular fungi from the assembled chromosomes of the mushroom Coprinopsis cinerea (Coprinus cinereus).</title>
        <authorList>
            <person name="Stajich J.E."/>
            <person name="Wilke S.K."/>
            <person name="Ahren D."/>
            <person name="Au C.H."/>
            <person name="Birren B.W."/>
            <person name="Borodovsky M."/>
            <person name="Burns C."/>
            <person name="Canbaeck B."/>
            <person name="Casselton L.A."/>
            <person name="Cheng C.K."/>
            <person name="Deng J."/>
            <person name="Dietrich F.S."/>
            <person name="Fargo D.C."/>
            <person name="Farman M.L."/>
            <person name="Gathman A.C."/>
            <person name="Goldberg J."/>
            <person name="Guigo R."/>
            <person name="Hoegger P.J."/>
            <person name="Hooker J.B."/>
            <person name="Huggins A."/>
            <person name="James T.Y."/>
            <person name="Kamada T."/>
            <person name="Kilaru S."/>
            <person name="Kodira C."/>
            <person name="Kuees U."/>
            <person name="Kupfer D."/>
            <person name="Kwan H.S."/>
            <person name="Lomsadze A."/>
            <person name="Li W."/>
            <person name="Lilly W.W."/>
            <person name="Ma L.-J."/>
            <person name="Mackey A.J."/>
            <person name="Manning G."/>
            <person name="Martin F."/>
            <person name="Muraguchi H."/>
            <person name="Natvig D.O."/>
            <person name="Palmerini H."/>
            <person name="Ramesh M.A."/>
            <person name="Rehmeyer C.J."/>
            <person name="Roe B.A."/>
            <person name="Shenoy N."/>
            <person name="Stanke M."/>
            <person name="Ter-Hovhannisyan V."/>
            <person name="Tunlid A."/>
            <person name="Velagapudi R."/>
            <person name="Vision T.J."/>
            <person name="Zeng Q."/>
            <person name="Zolan M.E."/>
            <person name="Pukkila P.J."/>
        </authorList>
    </citation>
    <scope>NUCLEOTIDE SEQUENCE [LARGE SCALE GENOMIC DNA]</scope>
    <source>
        <strain>Okayama-7 / 130 / ATCC MYA-4618 / FGSC 9003</strain>
    </source>
</reference>
<gene>
    <name type="ORF">CC1G_06235</name>
</gene>
<accession>A8NVB7</accession>
<accession>A0A1B1ZGC5</accession>
<proteinExistence type="evidence at protein level"/>
<protein>
    <recommendedName>
        <fullName evidence="4">Adenylate-forming reductase 06235</fullName>
        <ecNumber evidence="3">1.2.1.-</ecNumber>
    </recommendedName>
    <alternativeName>
        <fullName evidence="4">Alanine/valine/serine reductase</fullName>
    </alternativeName>
    <alternativeName>
        <fullName evidence="4">Nonribosomal peptide synthase 12-like enzyme</fullName>
        <shortName evidence="4">NRPS-like</shortName>
    </alternativeName>
</protein>
<keyword id="KW-0067">ATP-binding</keyword>
<keyword id="KW-0521">NADP</keyword>
<keyword id="KW-0547">Nucleotide-binding</keyword>
<keyword id="KW-0560">Oxidoreductase</keyword>
<keyword id="KW-1185">Reference proteome</keyword>